<dbReference type="EMBL" id="FM211192">
    <property type="protein sequence ID" value="CAR70097.1"/>
    <property type="molecule type" value="Genomic_DNA"/>
</dbReference>
<dbReference type="SMR" id="B8ZTP1"/>
<dbReference type="KEGG" id="mlb:MLBr00004"/>
<dbReference type="HOGENOM" id="CLU_087206_0_1_11"/>
<dbReference type="Proteomes" id="UP000006900">
    <property type="component" value="Chromosome"/>
</dbReference>
<dbReference type="HAMAP" id="MF_00630">
    <property type="entry name" value="UPF0232"/>
    <property type="match status" value="1"/>
</dbReference>
<dbReference type="InterPro" id="IPR007922">
    <property type="entry name" value="DciA-like"/>
</dbReference>
<dbReference type="InterPro" id="IPR023007">
    <property type="entry name" value="UPF0232_actinobac"/>
</dbReference>
<dbReference type="NCBIfam" id="NF002871">
    <property type="entry name" value="PRK03195.1"/>
    <property type="match status" value="1"/>
</dbReference>
<dbReference type="PANTHER" id="PTHR36456">
    <property type="entry name" value="UPF0232 PROTEIN SCO3875"/>
    <property type="match status" value="1"/>
</dbReference>
<dbReference type="PANTHER" id="PTHR36456:SF1">
    <property type="entry name" value="UPF0232 PROTEIN SCO3875"/>
    <property type="match status" value="1"/>
</dbReference>
<dbReference type="Pfam" id="PF05258">
    <property type="entry name" value="DciA"/>
    <property type="match status" value="1"/>
</dbReference>
<comment type="similarity">
    <text evidence="1">Belongs to the UPF0232 family.</text>
</comment>
<evidence type="ECO:0000255" key="1">
    <source>
        <dbReference type="HAMAP-Rule" id="MF_00630"/>
    </source>
</evidence>
<evidence type="ECO:0000256" key="2">
    <source>
        <dbReference type="SAM" id="MobiDB-lite"/>
    </source>
</evidence>
<organism>
    <name type="scientific">Mycobacterium leprae (strain Br4923)</name>
    <dbReference type="NCBI Taxonomy" id="561304"/>
    <lineage>
        <taxon>Bacteria</taxon>
        <taxon>Bacillati</taxon>
        <taxon>Actinomycetota</taxon>
        <taxon>Actinomycetes</taxon>
        <taxon>Mycobacteriales</taxon>
        <taxon>Mycobacteriaceae</taxon>
        <taxon>Mycobacterium</taxon>
    </lineage>
</organism>
<accession>B8ZTP1</accession>
<proteinExistence type="inferred from homology"/>
<name>Y004_MYCLB</name>
<gene>
    <name type="ordered locus">MLBr00004</name>
</gene>
<feature type="chain" id="PRO_1000147272" description="UPF0232 protein MLBr00004">
    <location>
        <begin position="1"/>
        <end position="189"/>
    </location>
</feature>
<feature type="region of interest" description="Disordered" evidence="2">
    <location>
        <begin position="59"/>
        <end position="78"/>
    </location>
</feature>
<reference key="1">
    <citation type="journal article" date="2009" name="Nat. Genet.">
        <title>Comparative genomic and phylogeographic analysis of Mycobacterium leprae.</title>
        <authorList>
            <person name="Monot M."/>
            <person name="Honore N."/>
            <person name="Garnier T."/>
            <person name="Zidane N."/>
            <person name="Sherafi D."/>
            <person name="Paniz-Mondolfi A."/>
            <person name="Matsuoka M."/>
            <person name="Taylor G.M."/>
            <person name="Donoghue H.D."/>
            <person name="Bouwman A."/>
            <person name="Mays S."/>
            <person name="Watson C."/>
            <person name="Lockwood D."/>
            <person name="Khamispour A."/>
            <person name="Dowlati Y."/>
            <person name="Jianping S."/>
            <person name="Rea T.H."/>
            <person name="Vera-Cabrera L."/>
            <person name="Stefani M.M."/>
            <person name="Banu S."/>
            <person name="Macdonald M."/>
            <person name="Sapkota B.R."/>
            <person name="Spencer J.S."/>
            <person name="Thomas J."/>
            <person name="Harshman K."/>
            <person name="Singh P."/>
            <person name="Busso P."/>
            <person name="Gattiker A."/>
            <person name="Rougemont J."/>
            <person name="Brennan P.J."/>
            <person name="Cole S.T."/>
        </authorList>
    </citation>
    <scope>NUCLEOTIDE SEQUENCE [LARGE SCALE GENOMIC DNA]</scope>
    <source>
        <strain>Br4923</strain>
    </source>
</reference>
<protein>
    <recommendedName>
        <fullName evidence="1">UPF0232 protein MLBr00004</fullName>
    </recommendedName>
</protein>
<sequence>MIESNESYSYGGDTIEPLGTLSGFDLVRRALEEARAAACAQGKDAGRGHVVPPVPFRVTDRRRNWSGPGPDVRDPQPLGKVAHDLAKKRGWSAQVAEGRVFGQWASMVGGQIADHAFPVGLNNGVLSVTAESTAWATQLRIMQAQLLAKIAAAVGNGVVTSLKITGPTAPSWRKGPWHIAGRGPRDTYG</sequence>